<keyword id="KW-0175">Coiled coil</keyword>
<keyword id="KW-0343">GTPase activation</keyword>
<keyword id="KW-0597">Phosphoprotein</keyword>
<keyword id="KW-1267">Proteomics identification</keyword>
<keyword id="KW-1185">Reference proteome</keyword>
<keyword id="KW-0728">SH3 domain</keyword>
<organism>
    <name type="scientific">Homo sapiens</name>
    <name type="common">Human</name>
    <dbReference type="NCBI Taxonomy" id="9606"/>
    <lineage>
        <taxon>Eukaryota</taxon>
        <taxon>Metazoa</taxon>
        <taxon>Chordata</taxon>
        <taxon>Craniata</taxon>
        <taxon>Vertebrata</taxon>
        <taxon>Euteleostomi</taxon>
        <taxon>Mammalia</taxon>
        <taxon>Eutheria</taxon>
        <taxon>Euarchontoglires</taxon>
        <taxon>Primates</taxon>
        <taxon>Haplorrhini</taxon>
        <taxon>Catarrhini</taxon>
        <taxon>Hominidae</taxon>
        <taxon>Homo</taxon>
    </lineage>
</organism>
<protein>
    <recommendedName>
        <fullName evidence="9">Rho GTPase-activating protein 42</fullName>
    </recommendedName>
    <alternativeName>
        <fullName>Rho GTPase-activating protein 10-like</fullName>
    </alternativeName>
    <alternativeName>
        <fullName>Rho-type GTPase-activating protein 42</fullName>
    </alternativeName>
</protein>
<reference key="1">
    <citation type="journal article" date="2006" name="Nature">
        <title>Human chromosome 11 DNA sequence and analysis including novel gene identification.</title>
        <authorList>
            <person name="Taylor T.D."/>
            <person name="Noguchi H."/>
            <person name="Totoki Y."/>
            <person name="Toyoda A."/>
            <person name="Kuroki Y."/>
            <person name="Dewar K."/>
            <person name="Lloyd C."/>
            <person name="Itoh T."/>
            <person name="Takeda T."/>
            <person name="Kim D.-W."/>
            <person name="She X."/>
            <person name="Barlow K.F."/>
            <person name="Bloom T."/>
            <person name="Bruford E."/>
            <person name="Chang J.L."/>
            <person name="Cuomo C.A."/>
            <person name="Eichler E."/>
            <person name="FitzGerald M.G."/>
            <person name="Jaffe D.B."/>
            <person name="LaButti K."/>
            <person name="Nicol R."/>
            <person name="Park H.-S."/>
            <person name="Seaman C."/>
            <person name="Sougnez C."/>
            <person name="Yang X."/>
            <person name="Zimmer A.R."/>
            <person name="Zody M.C."/>
            <person name="Birren B.W."/>
            <person name="Nusbaum C."/>
            <person name="Fujiyama A."/>
            <person name="Hattori M."/>
            <person name="Rogers J."/>
            <person name="Lander E.S."/>
            <person name="Sakaki Y."/>
        </authorList>
    </citation>
    <scope>NUCLEOTIDE SEQUENCE [LARGE SCALE GENOMIC DNA]</scope>
</reference>
<reference key="2">
    <citation type="journal article" date="2004" name="Genome Res.">
        <title>The status, quality, and expansion of the NIH full-length cDNA project: the Mammalian Gene Collection (MGC).</title>
        <authorList>
            <consortium name="The MGC Project Team"/>
        </authorList>
    </citation>
    <scope>NUCLEOTIDE SEQUENCE [LARGE SCALE MRNA] OF 1-128</scope>
</reference>
<reference key="3">
    <citation type="journal article" date="2004" name="Nat. Genet.">
        <title>Complete sequencing and characterization of 21,243 full-length human cDNAs.</title>
        <authorList>
            <person name="Ota T."/>
            <person name="Suzuki Y."/>
            <person name="Nishikawa T."/>
            <person name="Otsuki T."/>
            <person name="Sugiyama T."/>
            <person name="Irie R."/>
            <person name="Wakamatsu A."/>
            <person name="Hayashi K."/>
            <person name="Sato H."/>
            <person name="Nagai K."/>
            <person name="Kimura K."/>
            <person name="Makita H."/>
            <person name="Sekine M."/>
            <person name="Obayashi M."/>
            <person name="Nishi T."/>
            <person name="Shibahara T."/>
            <person name="Tanaka T."/>
            <person name="Ishii S."/>
            <person name="Yamamoto J."/>
            <person name="Saito K."/>
            <person name="Kawai Y."/>
            <person name="Isono Y."/>
            <person name="Nakamura Y."/>
            <person name="Nagahari K."/>
            <person name="Murakami K."/>
            <person name="Yasuda T."/>
            <person name="Iwayanagi T."/>
            <person name="Wagatsuma M."/>
            <person name="Shiratori A."/>
            <person name="Sudo H."/>
            <person name="Hosoiri T."/>
            <person name="Kaku Y."/>
            <person name="Kodaira H."/>
            <person name="Kondo H."/>
            <person name="Sugawara M."/>
            <person name="Takahashi M."/>
            <person name="Kanda K."/>
            <person name="Yokoi T."/>
            <person name="Furuya T."/>
            <person name="Kikkawa E."/>
            <person name="Omura Y."/>
            <person name="Abe K."/>
            <person name="Kamihara K."/>
            <person name="Katsuta N."/>
            <person name="Sato K."/>
            <person name="Tanikawa M."/>
            <person name="Yamazaki M."/>
            <person name="Ninomiya K."/>
            <person name="Ishibashi T."/>
            <person name="Yamashita H."/>
            <person name="Murakawa K."/>
            <person name="Fujimori K."/>
            <person name="Tanai H."/>
            <person name="Kimata M."/>
            <person name="Watanabe M."/>
            <person name="Hiraoka S."/>
            <person name="Chiba Y."/>
            <person name="Ishida S."/>
            <person name="Ono Y."/>
            <person name="Takiguchi S."/>
            <person name="Watanabe S."/>
            <person name="Yosida M."/>
            <person name="Hotuta T."/>
            <person name="Kusano J."/>
            <person name="Kanehori K."/>
            <person name="Takahashi-Fujii A."/>
            <person name="Hara H."/>
            <person name="Tanase T.-O."/>
            <person name="Nomura Y."/>
            <person name="Togiya S."/>
            <person name="Komai F."/>
            <person name="Hara R."/>
            <person name="Takeuchi K."/>
            <person name="Arita M."/>
            <person name="Imose N."/>
            <person name="Musashino K."/>
            <person name="Yuuki H."/>
            <person name="Oshima A."/>
            <person name="Sasaki N."/>
            <person name="Aotsuka S."/>
            <person name="Yoshikawa Y."/>
            <person name="Matsunawa H."/>
            <person name="Ichihara T."/>
            <person name="Shiohata N."/>
            <person name="Sano S."/>
            <person name="Moriya S."/>
            <person name="Momiyama H."/>
            <person name="Satoh N."/>
            <person name="Takami S."/>
            <person name="Terashima Y."/>
            <person name="Suzuki O."/>
            <person name="Nakagawa S."/>
            <person name="Senoh A."/>
            <person name="Mizoguchi H."/>
            <person name="Goto Y."/>
            <person name="Shimizu F."/>
            <person name="Wakebe H."/>
            <person name="Hishigaki H."/>
            <person name="Watanabe T."/>
            <person name="Sugiyama A."/>
            <person name="Takemoto M."/>
            <person name="Kawakami B."/>
            <person name="Yamazaki M."/>
            <person name="Watanabe K."/>
            <person name="Kumagai A."/>
            <person name="Itakura S."/>
            <person name="Fukuzumi Y."/>
            <person name="Fujimori Y."/>
            <person name="Komiyama M."/>
            <person name="Tashiro H."/>
            <person name="Tanigami A."/>
            <person name="Fujiwara T."/>
            <person name="Ono T."/>
            <person name="Yamada K."/>
            <person name="Fujii Y."/>
            <person name="Ozaki K."/>
            <person name="Hirao M."/>
            <person name="Ohmori Y."/>
            <person name="Kawabata A."/>
            <person name="Hikiji T."/>
            <person name="Kobatake N."/>
            <person name="Inagaki H."/>
            <person name="Ikema Y."/>
            <person name="Okamoto S."/>
            <person name="Okitani R."/>
            <person name="Kawakami T."/>
            <person name="Noguchi S."/>
            <person name="Itoh T."/>
            <person name="Shigeta K."/>
            <person name="Senba T."/>
            <person name="Matsumura K."/>
            <person name="Nakajima Y."/>
            <person name="Mizuno T."/>
            <person name="Morinaga M."/>
            <person name="Sasaki M."/>
            <person name="Togashi T."/>
            <person name="Oyama M."/>
            <person name="Hata H."/>
            <person name="Watanabe M."/>
            <person name="Komatsu T."/>
            <person name="Mizushima-Sugano J."/>
            <person name="Satoh T."/>
            <person name="Shirai Y."/>
            <person name="Takahashi Y."/>
            <person name="Nakagawa K."/>
            <person name="Okumura K."/>
            <person name="Nagase T."/>
            <person name="Nomura N."/>
            <person name="Kikuchi H."/>
            <person name="Masuho Y."/>
            <person name="Yamashita R."/>
            <person name="Nakai K."/>
            <person name="Yada T."/>
            <person name="Nakamura Y."/>
            <person name="Ohara O."/>
            <person name="Isogai T."/>
            <person name="Sugano S."/>
        </authorList>
    </citation>
    <scope>NUCLEOTIDE SEQUENCE [LARGE SCALE MRNA] OF 389-819</scope>
    <source>
        <tissue>Testis</tissue>
    </source>
</reference>
<reference key="4">
    <citation type="journal article" date="2008" name="Proc. Natl. Acad. Sci. U.S.A.">
        <title>A quantitative atlas of mitotic phosphorylation.</title>
        <authorList>
            <person name="Dephoure N."/>
            <person name="Zhou C."/>
            <person name="Villen J."/>
            <person name="Beausoleil S.A."/>
            <person name="Bakalarski C.E."/>
            <person name="Elledge S.J."/>
            <person name="Gygi S.P."/>
        </authorList>
    </citation>
    <scope>PHOSPHORYLATION [LARGE SCALE ANALYSIS] AT SER-811 AND TYR-870</scope>
    <scope>IDENTIFICATION BY MASS SPECTROMETRY [LARGE SCALE ANALYSIS]</scope>
    <source>
        <tissue>Cervix carcinoma</tissue>
    </source>
</reference>
<reference key="5">
    <citation type="journal article" date="2013" name="Nat. Commun.">
        <title>The smooth muscle-selective RhoGAP GRAF3 is a critical regulator of vascular tone and hypertension.</title>
        <authorList>
            <person name="Bai X."/>
            <person name="Lenhart K.C."/>
            <person name="Bird K.E."/>
            <person name="Suen A.A."/>
            <person name="Rojas M."/>
            <person name="Kakoki M."/>
            <person name="Li F."/>
            <person name="Smithies O."/>
            <person name="Mack C.P."/>
            <person name="Taylor J.M."/>
        </authorList>
    </citation>
    <scope>TISSUE SPECIFICITY</scope>
    <scope>FUNCTION</scope>
</reference>
<name>RHG42_HUMAN</name>
<dbReference type="EMBL" id="AC015600">
    <property type="status" value="NOT_ANNOTATED_CDS"/>
    <property type="molecule type" value="Genomic_DNA"/>
</dbReference>
<dbReference type="EMBL" id="AP000872">
    <property type="status" value="NOT_ANNOTATED_CDS"/>
    <property type="molecule type" value="Genomic_DNA"/>
</dbReference>
<dbReference type="EMBL" id="AP001351">
    <property type="status" value="NOT_ANNOTATED_CDS"/>
    <property type="molecule type" value="Genomic_DNA"/>
</dbReference>
<dbReference type="EMBL" id="BF511460">
    <property type="status" value="NOT_ANNOTATED_CDS"/>
    <property type="molecule type" value="mRNA"/>
</dbReference>
<dbReference type="EMBL" id="AK057372">
    <property type="protein sequence ID" value="BAB71456.1"/>
    <property type="status" value="ALT_SEQ"/>
    <property type="molecule type" value="mRNA"/>
</dbReference>
<dbReference type="RefSeq" id="NP_689645.2">
    <property type="nucleotide sequence ID" value="NM_152432.2"/>
</dbReference>
<dbReference type="SMR" id="A6NI28"/>
<dbReference type="BioGRID" id="126819">
    <property type="interactions" value="25"/>
</dbReference>
<dbReference type="FunCoup" id="A6NI28">
    <property type="interactions" value="128"/>
</dbReference>
<dbReference type="IntAct" id="A6NI28">
    <property type="interactions" value="10"/>
</dbReference>
<dbReference type="STRING" id="9606.ENSP00000298815"/>
<dbReference type="GlyGen" id="A6NI28">
    <property type="glycosylation" value="2 sites, 2 N-linked glycans (2 sites)"/>
</dbReference>
<dbReference type="iPTMnet" id="A6NI28"/>
<dbReference type="PhosphoSitePlus" id="A6NI28"/>
<dbReference type="BioMuta" id="ARHGAP42"/>
<dbReference type="jPOST" id="A6NI28"/>
<dbReference type="MassIVE" id="A6NI28"/>
<dbReference type="PaxDb" id="9606-ENSP00000298815"/>
<dbReference type="PeptideAtlas" id="A6NI28"/>
<dbReference type="ProteomicsDB" id="1242"/>
<dbReference type="Pumba" id="A6NI28"/>
<dbReference type="Antibodypedia" id="51394">
    <property type="antibodies" value="50 antibodies from 13 providers"/>
</dbReference>
<dbReference type="DNASU" id="143872"/>
<dbReference type="Ensembl" id="ENST00000298815.13">
    <property type="protein sequence ID" value="ENSP00000298815.7"/>
    <property type="gene ID" value="ENSG00000165895.19"/>
</dbReference>
<dbReference type="GeneID" id="143872"/>
<dbReference type="KEGG" id="hsa:143872"/>
<dbReference type="MANE-Select" id="ENST00000298815.13">
    <property type="protein sequence ID" value="ENSP00000298815.7"/>
    <property type="RefSeq nucleotide sequence ID" value="NM_152432.4"/>
    <property type="RefSeq protein sequence ID" value="NP_689645.2"/>
</dbReference>
<dbReference type="UCSC" id="uc001pge.2">
    <property type="organism name" value="human"/>
</dbReference>
<dbReference type="AGR" id="HGNC:26545"/>
<dbReference type="CTD" id="143872"/>
<dbReference type="DisGeNET" id="143872"/>
<dbReference type="GeneCards" id="ARHGAP42"/>
<dbReference type="HGNC" id="HGNC:26545">
    <property type="gene designation" value="ARHGAP42"/>
</dbReference>
<dbReference type="HPA" id="ENSG00000165895">
    <property type="expression patterns" value="Tissue enhanced (retina)"/>
</dbReference>
<dbReference type="MIM" id="615936">
    <property type="type" value="gene"/>
</dbReference>
<dbReference type="neXtProt" id="NX_A6NI28"/>
<dbReference type="OpenTargets" id="ENSG00000165895"/>
<dbReference type="PharmGKB" id="PA165543186"/>
<dbReference type="VEuPathDB" id="HostDB:ENSG00000165895"/>
<dbReference type="eggNOG" id="KOG1451">
    <property type="taxonomic scope" value="Eukaryota"/>
</dbReference>
<dbReference type="GeneTree" id="ENSGT00940000155492"/>
<dbReference type="HOGENOM" id="CLU_011532_1_0_1"/>
<dbReference type="InParanoid" id="A6NI28"/>
<dbReference type="OMA" id="ECIGETQ"/>
<dbReference type="OrthoDB" id="3183924at2759"/>
<dbReference type="PAN-GO" id="A6NI28">
    <property type="GO annotations" value="1 GO annotation based on evolutionary models"/>
</dbReference>
<dbReference type="PhylomeDB" id="A6NI28"/>
<dbReference type="TreeFam" id="TF316851"/>
<dbReference type="PathwayCommons" id="A6NI28"/>
<dbReference type="Reactome" id="R-HSA-8980692">
    <property type="pathway name" value="RHOA GTPase cycle"/>
</dbReference>
<dbReference type="Reactome" id="R-HSA-9013148">
    <property type="pathway name" value="CDC42 GTPase cycle"/>
</dbReference>
<dbReference type="Reactome" id="R-HSA-9013149">
    <property type="pathway name" value="RAC1 GTPase cycle"/>
</dbReference>
<dbReference type="Reactome" id="R-HSA-9013404">
    <property type="pathway name" value="RAC2 GTPase cycle"/>
</dbReference>
<dbReference type="Reactome" id="R-HSA-9013423">
    <property type="pathway name" value="RAC3 GTPase cycle"/>
</dbReference>
<dbReference type="SignaLink" id="A6NI28"/>
<dbReference type="BioGRID-ORCS" id="143872">
    <property type="hits" value="18 hits in 277 CRISPR screens"/>
</dbReference>
<dbReference type="ChiTaRS" id="ARHGAP42">
    <property type="organism name" value="human"/>
</dbReference>
<dbReference type="GenomeRNAi" id="143872"/>
<dbReference type="Pharos" id="A6NI28">
    <property type="development level" value="Tbio"/>
</dbReference>
<dbReference type="PRO" id="PR:A6NI28"/>
<dbReference type="Proteomes" id="UP000005640">
    <property type="component" value="Chromosome 11"/>
</dbReference>
<dbReference type="RNAct" id="A6NI28">
    <property type="molecule type" value="protein"/>
</dbReference>
<dbReference type="Bgee" id="ENSG00000165895">
    <property type="expression patterns" value="Expressed in calcaneal tendon and 154 other cell types or tissues"/>
</dbReference>
<dbReference type="ExpressionAtlas" id="A6NI28">
    <property type="expression patterns" value="baseline and differential"/>
</dbReference>
<dbReference type="GO" id="GO:0005737">
    <property type="term" value="C:cytoplasm"/>
    <property type="evidence" value="ECO:0007669"/>
    <property type="project" value="InterPro"/>
</dbReference>
<dbReference type="GO" id="GO:0005096">
    <property type="term" value="F:GTPase activator activity"/>
    <property type="evidence" value="ECO:0000314"/>
    <property type="project" value="UniProtKB"/>
</dbReference>
<dbReference type="GO" id="GO:0090630">
    <property type="term" value="P:activation of GTPase activity"/>
    <property type="evidence" value="ECO:0000314"/>
    <property type="project" value="UniProtKB"/>
</dbReference>
<dbReference type="GO" id="GO:0035024">
    <property type="term" value="P:negative regulation of Rho protein signal transduction"/>
    <property type="evidence" value="ECO:0007669"/>
    <property type="project" value="Ensembl"/>
</dbReference>
<dbReference type="GO" id="GO:0003085">
    <property type="term" value="P:negative regulation of systemic arterial blood pressure"/>
    <property type="evidence" value="ECO:0007669"/>
    <property type="project" value="Ensembl"/>
</dbReference>
<dbReference type="GO" id="GO:1904694">
    <property type="term" value="P:negative regulation of vascular associated smooth muscle contraction"/>
    <property type="evidence" value="ECO:0007669"/>
    <property type="project" value="Ensembl"/>
</dbReference>
<dbReference type="GO" id="GO:0007165">
    <property type="term" value="P:signal transduction"/>
    <property type="evidence" value="ECO:0007669"/>
    <property type="project" value="InterPro"/>
</dbReference>
<dbReference type="CDD" id="cd01249">
    <property type="entry name" value="BAR-PH_GRAF_family"/>
    <property type="match status" value="1"/>
</dbReference>
<dbReference type="CDD" id="cd07634">
    <property type="entry name" value="BAR_GAP10-like"/>
    <property type="match status" value="1"/>
</dbReference>
<dbReference type="CDD" id="cd04374">
    <property type="entry name" value="RhoGAP_Graf"/>
    <property type="match status" value="1"/>
</dbReference>
<dbReference type="CDD" id="cd12066">
    <property type="entry name" value="SH3_GRAF3"/>
    <property type="match status" value="1"/>
</dbReference>
<dbReference type="FunFam" id="2.30.29.30:FF:000161">
    <property type="entry name" value="Rho GTPase activating protein 42"/>
    <property type="match status" value="1"/>
</dbReference>
<dbReference type="FunFam" id="2.30.30.40:FF:000114">
    <property type="entry name" value="Rho GTPase activating protein 42"/>
    <property type="match status" value="1"/>
</dbReference>
<dbReference type="FunFam" id="1.20.1270.60:FF:000001">
    <property type="entry name" value="Rho GTPase-activating protein 26"/>
    <property type="match status" value="1"/>
</dbReference>
<dbReference type="FunFam" id="1.10.555.10:FF:000008">
    <property type="entry name" value="Rho GTPase-activating protein 42"/>
    <property type="match status" value="1"/>
</dbReference>
<dbReference type="Gene3D" id="1.20.1270.60">
    <property type="entry name" value="Arfaptin homology (AH) domain/BAR domain"/>
    <property type="match status" value="1"/>
</dbReference>
<dbReference type="Gene3D" id="2.30.29.30">
    <property type="entry name" value="Pleckstrin-homology domain (PH domain)/Phosphotyrosine-binding domain (PTB)"/>
    <property type="match status" value="1"/>
</dbReference>
<dbReference type="Gene3D" id="1.10.555.10">
    <property type="entry name" value="Rho GTPase activation protein"/>
    <property type="match status" value="1"/>
</dbReference>
<dbReference type="Gene3D" id="2.30.30.40">
    <property type="entry name" value="SH3 Domains"/>
    <property type="match status" value="1"/>
</dbReference>
<dbReference type="InterPro" id="IPR027267">
    <property type="entry name" value="AH/BAR_dom_sf"/>
</dbReference>
<dbReference type="InterPro" id="IPR004148">
    <property type="entry name" value="BAR_dom"/>
</dbReference>
<dbReference type="InterPro" id="IPR047234">
    <property type="entry name" value="GRAF_fam"/>
</dbReference>
<dbReference type="InterPro" id="IPR011993">
    <property type="entry name" value="PH-like_dom_sf"/>
</dbReference>
<dbReference type="InterPro" id="IPR001849">
    <property type="entry name" value="PH_domain"/>
</dbReference>
<dbReference type="InterPro" id="IPR047225">
    <property type="entry name" value="PH_GRAF"/>
</dbReference>
<dbReference type="InterPro" id="IPR008936">
    <property type="entry name" value="Rho_GTPase_activation_prot"/>
</dbReference>
<dbReference type="InterPro" id="IPR000198">
    <property type="entry name" value="RhoGAP_dom"/>
</dbReference>
<dbReference type="InterPro" id="IPR036028">
    <property type="entry name" value="SH3-like_dom_sf"/>
</dbReference>
<dbReference type="InterPro" id="IPR001452">
    <property type="entry name" value="SH3_domain"/>
</dbReference>
<dbReference type="PANTHER" id="PTHR12552">
    <property type="entry name" value="OLIGOPHRENIN 1"/>
    <property type="match status" value="1"/>
</dbReference>
<dbReference type="PANTHER" id="PTHR12552:SF3">
    <property type="entry name" value="RHO GTPASE-ACTIVATING PROTEIN 42"/>
    <property type="match status" value="1"/>
</dbReference>
<dbReference type="Pfam" id="PF16746">
    <property type="entry name" value="BAR_3"/>
    <property type="match status" value="1"/>
</dbReference>
<dbReference type="Pfam" id="PF00169">
    <property type="entry name" value="PH"/>
    <property type="match status" value="1"/>
</dbReference>
<dbReference type="Pfam" id="PF00620">
    <property type="entry name" value="RhoGAP"/>
    <property type="match status" value="1"/>
</dbReference>
<dbReference type="Pfam" id="PF14604">
    <property type="entry name" value="SH3_9"/>
    <property type="match status" value="1"/>
</dbReference>
<dbReference type="SMART" id="SM00233">
    <property type="entry name" value="PH"/>
    <property type="match status" value="1"/>
</dbReference>
<dbReference type="SMART" id="SM00324">
    <property type="entry name" value="RhoGAP"/>
    <property type="match status" value="1"/>
</dbReference>
<dbReference type="SMART" id="SM00326">
    <property type="entry name" value="SH3"/>
    <property type="match status" value="1"/>
</dbReference>
<dbReference type="SUPFAM" id="SSF103657">
    <property type="entry name" value="BAR/IMD domain-like"/>
    <property type="match status" value="1"/>
</dbReference>
<dbReference type="SUPFAM" id="SSF48350">
    <property type="entry name" value="GTPase activation domain, GAP"/>
    <property type="match status" value="1"/>
</dbReference>
<dbReference type="SUPFAM" id="SSF50729">
    <property type="entry name" value="PH domain-like"/>
    <property type="match status" value="1"/>
</dbReference>
<dbReference type="SUPFAM" id="SSF50044">
    <property type="entry name" value="SH3-domain"/>
    <property type="match status" value="1"/>
</dbReference>
<dbReference type="PROSITE" id="PS50003">
    <property type="entry name" value="PH_DOMAIN"/>
    <property type="match status" value="1"/>
</dbReference>
<dbReference type="PROSITE" id="PS50238">
    <property type="entry name" value="RHOGAP"/>
    <property type="match status" value="1"/>
</dbReference>
<dbReference type="PROSITE" id="PS50002">
    <property type="entry name" value="SH3"/>
    <property type="match status" value="1"/>
</dbReference>
<sequence length="874" mass="98569">MGLPTLEFSDSYLDSPDFRERLQCHEIELERTNKFIKELIKDGSLLIGALRNLSMAVQKFSQSLQDFQFECIGDAETDDEISIAQSLKEFARLLIAVEEERRRLIQNANDVLIAPLEKFRKEQIGAAKDGKKKFDKESEKYYSILEKHLNLSAKKKESHLQEADTQIDREHQNFYEASLEYVFKIQEVQEKKKFEFVEPLLSFLQGLFTFYHEGYELAQEFAPYKQQLQFNLQNTRNNFESTRQEVERLMQRMKSANQDYRPPSQWTMEGYLYVQEKRPLGFTWIKHYCTYDKGSKTFTMSVSEMKSSGKMNGLVTSSPEMFKLKSCIRRKTDSIDKRFCFDIEVVERHGIITLQAFSEANRKLWLEAMDGKEPIYTLPAIISKKEEMYLNEAGFNFVRKCIQAVETRGITILGLYRIGGVNSKVQKLMNTTFSPKSPPDIDIDIELWDNKTITSGLKNYLRCLAEPLMTYKLHKDFIIAVKSDDQNYRVEAVHALVHKLPEKNREMLDILIKHLVKVSLHSQQNLMTVSNLGVIFGPTLMRAQEETVAAMMNIKFQNIVVEILIEHYEKIFHTAPDPSIPLPQPQSRSGSRRTRAICLSTGSRKPRGRYTPCLAEPDSDSYSSSPDSTPMGSIESLSSHSSEQNSTTKSASCQPREKSGGIPWIATPSSSNGQKSLGLWTTSPESSSREDATKTDAESDCQSVASVTSPGDVSPPIDLVKKEPYGLSGLKRASASSLRSISAAEGNKSYSGSIQSLTSVGSKETPKASPNPDLPPKMCRRLRLDTASSNGYQRPGSVVAAKAQLFENVGSPKPVSSGRQAKAMYSCKAEHSHELSFPQGAIFSNVYPSVEPGWLKATYEGKTGLVPENYVVFL</sequence>
<proteinExistence type="evidence at protein level"/>
<accession>A6NI28</accession>
<accession>Q96M56</accession>
<gene>
    <name evidence="10" type="primary">ARHGAP42</name>
    <name evidence="8" type="synonym">GRAF3</name>
    <name evidence="10" type="synonym">TMEM133</name>
</gene>
<comment type="function">
    <text evidence="7">May influence blood pressure by functioning as a GTPase-activating protein for RHOA in vascular smooth muscle.</text>
</comment>
<comment type="tissue specificity">
    <text evidence="7">Highly and selectively expressed in smooth muscle cells.</text>
</comment>
<comment type="sequence caution" evidence="9">
    <conflict type="miscellaneous discrepancy">
        <sequence resource="EMBL-CDS" id="BAB71456"/>
    </conflict>
    <text>Probable cloning artifact.</text>
</comment>
<comment type="sequence caution" evidence="9">
    <conflict type="miscellaneous discrepancy">
        <sequence resource="EMBL" id="BF511460"/>
    </conflict>
    <text>Contaminating sequence. Sequence of unknown origin in the C-terminal part.</text>
</comment>
<evidence type="ECO:0000250" key="1">
    <source>
        <dbReference type="UniProtKB" id="B2RQE8"/>
    </source>
</evidence>
<evidence type="ECO:0000255" key="2"/>
<evidence type="ECO:0000255" key="3">
    <source>
        <dbReference type="PROSITE-ProRule" id="PRU00145"/>
    </source>
</evidence>
<evidence type="ECO:0000255" key="4">
    <source>
        <dbReference type="PROSITE-ProRule" id="PRU00172"/>
    </source>
</evidence>
<evidence type="ECO:0000255" key="5">
    <source>
        <dbReference type="PROSITE-ProRule" id="PRU00192"/>
    </source>
</evidence>
<evidence type="ECO:0000256" key="6">
    <source>
        <dbReference type="SAM" id="MobiDB-lite"/>
    </source>
</evidence>
<evidence type="ECO:0000269" key="7">
    <source>
    </source>
</evidence>
<evidence type="ECO:0000303" key="8">
    <source>
    </source>
</evidence>
<evidence type="ECO:0000305" key="9"/>
<evidence type="ECO:0000312" key="10">
    <source>
        <dbReference type="HGNC" id="HGNC:26545"/>
    </source>
</evidence>
<evidence type="ECO:0007744" key="11">
    <source>
    </source>
</evidence>
<feature type="chain" id="PRO_0000342407" description="Rho GTPase-activating protein 42">
    <location>
        <begin position="1"/>
        <end position="874"/>
    </location>
</feature>
<feature type="domain" description="BAR">
    <location>
        <begin position="7"/>
        <end position="262"/>
    </location>
</feature>
<feature type="domain" description="PH" evidence="3">
    <location>
        <begin position="265"/>
        <end position="374"/>
    </location>
</feature>
<feature type="domain" description="Rho-GAP" evidence="4">
    <location>
        <begin position="376"/>
        <end position="572"/>
    </location>
</feature>
<feature type="domain" description="SH3" evidence="5">
    <location>
        <begin position="816"/>
        <end position="874"/>
    </location>
</feature>
<feature type="region of interest" description="Disordered" evidence="6">
    <location>
        <begin position="575"/>
        <end position="720"/>
    </location>
</feature>
<feature type="region of interest" description="Disordered" evidence="6">
    <location>
        <begin position="749"/>
        <end position="777"/>
    </location>
</feature>
<feature type="coiled-coil region" evidence="2">
    <location>
        <begin position="225"/>
        <end position="261"/>
    </location>
</feature>
<feature type="compositionally biased region" description="Low complexity" evidence="6">
    <location>
        <begin position="620"/>
        <end position="650"/>
    </location>
</feature>
<feature type="compositionally biased region" description="Polar residues" evidence="6">
    <location>
        <begin position="667"/>
        <end position="686"/>
    </location>
</feature>
<feature type="compositionally biased region" description="Basic and acidic residues" evidence="6">
    <location>
        <begin position="687"/>
        <end position="697"/>
    </location>
</feature>
<feature type="compositionally biased region" description="Polar residues" evidence="6">
    <location>
        <begin position="700"/>
        <end position="711"/>
    </location>
</feature>
<feature type="compositionally biased region" description="Polar residues" evidence="6">
    <location>
        <begin position="749"/>
        <end position="762"/>
    </location>
</feature>
<feature type="site" description="Arginine finger; crucial for GTP hydrolysis by stabilizing the transition state" evidence="4">
    <location>
        <position position="417"/>
    </location>
</feature>
<feature type="modified residue" description="Phosphotyrosine" evidence="1">
    <location>
        <position position="376"/>
    </location>
</feature>
<feature type="modified residue" description="Phosphoserine" evidence="1">
    <location>
        <position position="683"/>
    </location>
</feature>
<feature type="modified residue" description="Phosphoserine" evidence="1">
    <location>
        <position position="740"/>
    </location>
</feature>
<feature type="modified residue" description="Phosphoserine" evidence="1">
    <location>
        <position position="753"/>
    </location>
</feature>
<feature type="modified residue" description="Phosphoserine" evidence="1">
    <location>
        <position position="756"/>
    </location>
</feature>
<feature type="modified residue" description="Phosphoserine" evidence="11">
    <location>
        <position position="811"/>
    </location>
</feature>
<feature type="modified residue" description="Phosphotyrosine" evidence="11">
    <location>
        <position position="870"/>
    </location>
</feature>
<feature type="sequence conflict" description="In Ref. 2; BF511460." evidence="9" ref="2">
    <original>F</original>
    <variation>V</variation>
    <location>
        <position position="18"/>
    </location>
</feature>
<feature type="sequence conflict" description="In Ref. 2; BF511460." evidence="9" ref="2">
    <original>N</original>
    <variation>D</variation>
    <location>
        <position position="109"/>
    </location>
</feature>
<feature type="sequence conflict" description="In Ref. 2; BF511460." evidence="9" ref="2">
    <original>I</original>
    <variation>M</variation>
    <location>
        <position position="124"/>
    </location>
</feature>
<feature type="sequence conflict" description="In Ref. 3; BAB71456." evidence="9" ref="3">
    <original>I</original>
    <variation>V</variation>
    <location>
        <position position="571"/>
    </location>
</feature>
<feature type="sequence conflict" description="In Ref. 3; BAB71456." evidence="9" ref="3">
    <original>V</original>
    <variation>I</variation>
    <location>
        <position position="713"/>
    </location>
</feature>